<feature type="chain" id="PRO_0000408768" description="bZIP transcription factor 1">
    <location>
        <begin position="1"/>
        <end position="234"/>
    </location>
</feature>
<feature type="domain" description="bZIP">
    <location>
        <begin position="106"/>
        <end position="169"/>
    </location>
</feature>
<feature type="region of interest" description="Disordered" evidence="3">
    <location>
        <begin position="67"/>
        <end position="134"/>
    </location>
</feature>
<feature type="region of interest" description="Basic motif" evidence="1">
    <location>
        <begin position="109"/>
        <end position="128"/>
    </location>
</feature>
<feature type="region of interest" description="Leucine-zipper" evidence="1">
    <location>
        <begin position="134"/>
        <end position="155"/>
    </location>
</feature>
<feature type="compositionally biased region" description="Polar residues" evidence="3">
    <location>
        <begin position="70"/>
        <end position="86"/>
    </location>
</feature>
<feature type="compositionally biased region" description="Basic and acidic residues" evidence="3">
    <location>
        <begin position="88"/>
        <end position="128"/>
    </location>
</feature>
<accession>Q5BUB4</accession>
<sequence>MNLSRFAPSPSSDSLISTLRPRAAVRRLHSNITGPMTPFKTAVNAYVASEGTDNSYVVRPRLYNDKRAQSDGSNALLSSIGPSGTTKRPRDEMDCFTDTHKHKRGDGNKSRRREQCRANQARYRDKQRNAQQQLERSVEQLQSELSTLKHRNLDLASRQRTNQSPWNTVAEVFRLLGVCFRSPWRVTCVQEMRNHSEMRQILAILERSFTHDVAMGDLRGIDALMEQLLQFSQY</sequence>
<organism>
    <name type="scientific">Phytophthora infestans</name>
    <name type="common">Potato late blight agent</name>
    <name type="synonym">Botrytis infestans</name>
    <dbReference type="NCBI Taxonomy" id="4787"/>
    <lineage>
        <taxon>Eukaryota</taxon>
        <taxon>Sar</taxon>
        <taxon>Stramenopiles</taxon>
        <taxon>Oomycota</taxon>
        <taxon>Peronosporales</taxon>
        <taxon>Peronosporaceae</taxon>
        <taxon>Phytophthora</taxon>
    </lineage>
</organism>
<keyword id="KW-0238">DNA-binding</keyword>
<keyword id="KW-0539">Nucleus</keyword>
<keyword id="KW-0804">Transcription</keyword>
<keyword id="KW-0805">Transcription regulation</keyword>
<gene>
    <name evidence="7" type="primary">BZP1</name>
</gene>
<proteinExistence type="evidence at protein level"/>
<name>BZP1_PHYIN</name>
<reference evidence="6 7" key="1">
    <citation type="journal article" date="2005" name="Mol. Microbiol.">
        <title>A bZIP transcription factor from Phytophthora interacts with a protein kinase and is required for zoospore motility and plant infection.</title>
        <authorList>
            <person name="Blanco F.A."/>
            <person name="Judelson H.S."/>
        </authorList>
    </citation>
    <scope>NUCLEOTIDE SEQUENCE [MRNA]</scope>
    <scope>FUNCTION</scope>
    <scope>INTERACTION WITH PKZ1</scope>
    <scope>DEVELOPMENTAL STAGE</scope>
    <source>
        <strain evidence="7">2.16</strain>
        <strain evidence="4">Isolate 1306</strain>
        <strain evidence="4">Isolate 88069</strain>
    </source>
</reference>
<protein>
    <recommendedName>
        <fullName>bZIP transcription factor 1</fullName>
    </recommendedName>
    <alternativeName>
        <fullName evidence="5">bZIP protein 1</fullName>
        <shortName evidence="5">Pibzp1</shortName>
    </alternativeName>
</protein>
<comment type="function">
    <text evidence="4">Required for normal zoospore movement, formation of appressoria by germinated zoospore cysts and plant infection.</text>
</comment>
<comment type="subunit">
    <text evidence="4">Interacts with PKZ1.</text>
</comment>
<comment type="subcellular location">
    <subcellularLocation>
        <location evidence="6">Nucleus</location>
    </subcellularLocation>
</comment>
<comment type="developmental stage">
    <text evidence="4">Expressed in all stages of the life cycle.</text>
</comment>
<comment type="similarity">
    <text evidence="2">Belongs to the bZIP family.</text>
</comment>
<evidence type="ECO:0000250" key="1"/>
<evidence type="ECO:0000255" key="2"/>
<evidence type="ECO:0000256" key="3">
    <source>
        <dbReference type="SAM" id="MobiDB-lite"/>
    </source>
</evidence>
<evidence type="ECO:0000269" key="4">
    <source>
    </source>
</evidence>
<evidence type="ECO:0000303" key="5">
    <source>
    </source>
</evidence>
<evidence type="ECO:0000305" key="6"/>
<evidence type="ECO:0000312" key="7">
    <source>
        <dbReference type="EMBL" id="AAX19188.1"/>
    </source>
</evidence>
<dbReference type="EMBL" id="AY855210">
    <property type="protein sequence ID" value="AAX19188.1"/>
    <property type="molecule type" value="Genomic_DNA"/>
</dbReference>
<dbReference type="SMR" id="Q5BUB4"/>
<dbReference type="VEuPathDB" id="FungiDB:PITG_09190"/>
<dbReference type="PHI-base" id="PHI:499"/>
<dbReference type="GO" id="GO:0005634">
    <property type="term" value="C:nucleus"/>
    <property type="evidence" value="ECO:0007669"/>
    <property type="project" value="UniProtKB-SubCell"/>
</dbReference>
<dbReference type="GO" id="GO:0003677">
    <property type="term" value="F:DNA binding"/>
    <property type="evidence" value="ECO:0007669"/>
    <property type="project" value="UniProtKB-KW"/>
</dbReference>
<dbReference type="GO" id="GO:0075016">
    <property type="term" value="P:appressorium formation"/>
    <property type="evidence" value="ECO:0000315"/>
    <property type="project" value="GO_Central"/>
</dbReference>
<dbReference type="GO" id="GO:0120326">
    <property type="term" value="P:appressorium-mediated entry into host"/>
    <property type="evidence" value="ECO:0000315"/>
    <property type="project" value="GO_Central"/>
</dbReference>
<dbReference type="GO" id="GO:0048870">
    <property type="term" value="P:cell motility"/>
    <property type="evidence" value="ECO:0000315"/>
    <property type="project" value="GO_Central"/>
</dbReference>
<dbReference type="CDD" id="cd14686">
    <property type="entry name" value="bZIP"/>
    <property type="match status" value="1"/>
</dbReference>